<evidence type="ECO:0000255" key="1">
    <source>
        <dbReference type="HAMAP-Rule" id="MF_00001"/>
    </source>
</evidence>
<name>PYRB_METKA</name>
<feature type="chain" id="PRO_0000113248" description="Aspartate carbamoyltransferase catalytic subunit">
    <location>
        <begin position="1"/>
        <end position="309"/>
    </location>
</feature>
<feature type="binding site" evidence="1">
    <location>
        <position position="57"/>
    </location>
    <ligand>
        <name>carbamoyl phosphate</name>
        <dbReference type="ChEBI" id="CHEBI:58228"/>
    </ligand>
</feature>
<feature type="binding site" evidence="1">
    <location>
        <position position="58"/>
    </location>
    <ligand>
        <name>carbamoyl phosphate</name>
        <dbReference type="ChEBI" id="CHEBI:58228"/>
    </ligand>
</feature>
<feature type="binding site" evidence="1">
    <location>
        <position position="86"/>
    </location>
    <ligand>
        <name>L-aspartate</name>
        <dbReference type="ChEBI" id="CHEBI:29991"/>
    </ligand>
</feature>
<feature type="binding site" evidence="1">
    <location>
        <position position="107"/>
    </location>
    <ligand>
        <name>carbamoyl phosphate</name>
        <dbReference type="ChEBI" id="CHEBI:58228"/>
    </ligand>
</feature>
<feature type="binding site" evidence="1">
    <location>
        <position position="135"/>
    </location>
    <ligand>
        <name>carbamoyl phosphate</name>
        <dbReference type="ChEBI" id="CHEBI:58228"/>
    </ligand>
</feature>
<feature type="binding site" evidence="1">
    <location>
        <position position="138"/>
    </location>
    <ligand>
        <name>carbamoyl phosphate</name>
        <dbReference type="ChEBI" id="CHEBI:58228"/>
    </ligand>
</feature>
<feature type="binding site" evidence="1">
    <location>
        <position position="168"/>
    </location>
    <ligand>
        <name>L-aspartate</name>
        <dbReference type="ChEBI" id="CHEBI:29991"/>
    </ligand>
</feature>
<feature type="binding site" evidence="1">
    <location>
        <position position="229"/>
    </location>
    <ligand>
        <name>L-aspartate</name>
        <dbReference type="ChEBI" id="CHEBI:29991"/>
    </ligand>
</feature>
<feature type="binding site" evidence="1">
    <location>
        <position position="269"/>
    </location>
    <ligand>
        <name>carbamoyl phosphate</name>
        <dbReference type="ChEBI" id="CHEBI:58228"/>
    </ligand>
</feature>
<feature type="binding site" evidence="1">
    <location>
        <position position="270"/>
    </location>
    <ligand>
        <name>carbamoyl phosphate</name>
        <dbReference type="ChEBI" id="CHEBI:58228"/>
    </ligand>
</feature>
<gene>
    <name evidence="1" type="primary">pyrB</name>
    <name type="ordered locus">MK1480</name>
</gene>
<protein>
    <recommendedName>
        <fullName evidence="1">Aspartate carbamoyltransferase catalytic subunit</fullName>
        <ecNumber evidence="1">2.1.3.2</ecNumber>
    </recommendedName>
    <alternativeName>
        <fullName evidence="1">Aspartate transcarbamylase</fullName>
        <shortName evidence="1">ATCase</shortName>
    </alternativeName>
</protein>
<sequence length="309" mass="34690">MSSFANRDVISVRDFTRKELEELLSHAEEMERVYERGGDDRLSGKILATLFFSPSTRTRLSFESAMHRLGGDVISLGGKEAASTAKGENLADTVRTVEHYCDVIVLRHPKEGAARLAAELTDVPVINAGDGANQHPTQTFLDLYTIMKEKGRIGGLRIGLLGDLKYGRTVHSLAYALALFGAKIHLISPEELRMPSHILEELEQIGAEVEEHRDLEEILPDLDVLYVTRIQREMFPDPEEFERVKGSYKVTRELIEEHARSDLVILHPLPRVDEIEPDVDELPQARYFDQVRNGVIVRMALLDLILGGG</sequence>
<reference key="1">
    <citation type="journal article" date="2002" name="Proc. Natl. Acad. Sci. U.S.A.">
        <title>The complete genome of hyperthermophile Methanopyrus kandleri AV19 and monophyly of archaeal methanogens.</title>
        <authorList>
            <person name="Slesarev A.I."/>
            <person name="Mezhevaya K.V."/>
            <person name="Makarova K.S."/>
            <person name="Polushin N.N."/>
            <person name="Shcherbinina O.V."/>
            <person name="Shakhova V.V."/>
            <person name="Belova G.I."/>
            <person name="Aravind L."/>
            <person name="Natale D.A."/>
            <person name="Rogozin I.B."/>
            <person name="Tatusov R.L."/>
            <person name="Wolf Y.I."/>
            <person name="Stetter K.O."/>
            <person name="Malykh A.G."/>
            <person name="Koonin E.V."/>
            <person name="Kozyavkin S.A."/>
        </authorList>
    </citation>
    <scope>NUCLEOTIDE SEQUENCE [LARGE SCALE GENOMIC DNA]</scope>
    <source>
        <strain>AV19 / DSM 6324 / JCM 9639 / NBRC 100938</strain>
    </source>
</reference>
<keyword id="KW-0665">Pyrimidine biosynthesis</keyword>
<keyword id="KW-1185">Reference proteome</keyword>
<keyword id="KW-0808">Transferase</keyword>
<proteinExistence type="inferred from homology"/>
<comment type="function">
    <text evidence="1">Catalyzes the condensation of carbamoyl phosphate and aspartate to form carbamoyl aspartate and inorganic phosphate, the committed step in the de novo pyrimidine nucleotide biosynthesis pathway.</text>
</comment>
<comment type="catalytic activity">
    <reaction evidence="1">
        <text>carbamoyl phosphate + L-aspartate = N-carbamoyl-L-aspartate + phosphate + H(+)</text>
        <dbReference type="Rhea" id="RHEA:20013"/>
        <dbReference type="ChEBI" id="CHEBI:15378"/>
        <dbReference type="ChEBI" id="CHEBI:29991"/>
        <dbReference type="ChEBI" id="CHEBI:32814"/>
        <dbReference type="ChEBI" id="CHEBI:43474"/>
        <dbReference type="ChEBI" id="CHEBI:58228"/>
        <dbReference type="EC" id="2.1.3.2"/>
    </reaction>
</comment>
<comment type="pathway">
    <text evidence="1">Pyrimidine metabolism; UMP biosynthesis via de novo pathway; (S)-dihydroorotate from bicarbonate: step 2/3.</text>
</comment>
<comment type="subunit">
    <text evidence="1">Heterooligomer of catalytic and regulatory chains.</text>
</comment>
<comment type="similarity">
    <text evidence="1">Belongs to the aspartate/ornithine carbamoyltransferase superfamily. ATCase family.</text>
</comment>
<organism>
    <name type="scientific">Methanopyrus kandleri (strain AV19 / DSM 6324 / JCM 9639 / NBRC 100938)</name>
    <dbReference type="NCBI Taxonomy" id="190192"/>
    <lineage>
        <taxon>Archaea</taxon>
        <taxon>Methanobacteriati</taxon>
        <taxon>Methanobacteriota</taxon>
        <taxon>Methanomada group</taxon>
        <taxon>Methanopyri</taxon>
        <taxon>Methanopyrales</taxon>
        <taxon>Methanopyraceae</taxon>
        <taxon>Methanopyrus</taxon>
    </lineage>
</organism>
<dbReference type="EC" id="2.1.3.2" evidence="1"/>
<dbReference type="EMBL" id="AE009439">
    <property type="protein sequence ID" value="AAM02693.1"/>
    <property type="molecule type" value="Genomic_DNA"/>
</dbReference>
<dbReference type="RefSeq" id="WP_011019848.1">
    <property type="nucleotide sequence ID" value="NC_003551.1"/>
</dbReference>
<dbReference type="SMR" id="Q8TVB2"/>
<dbReference type="FunCoup" id="Q8TVB2">
    <property type="interactions" value="214"/>
</dbReference>
<dbReference type="STRING" id="190192.MK1480"/>
<dbReference type="PaxDb" id="190192-MK1480"/>
<dbReference type="EnsemblBacteria" id="AAM02693">
    <property type="protein sequence ID" value="AAM02693"/>
    <property type="gene ID" value="MK1480"/>
</dbReference>
<dbReference type="GeneID" id="1478075"/>
<dbReference type="KEGG" id="mka:MK1480"/>
<dbReference type="PATRIC" id="fig|190192.8.peg.1637"/>
<dbReference type="HOGENOM" id="CLU_043846_1_2_2"/>
<dbReference type="InParanoid" id="Q8TVB2"/>
<dbReference type="OrthoDB" id="7792at2157"/>
<dbReference type="UniPathway" id="UPA00070">
    <property type="reaction ID" value="UER00116"/>
</dbReference>
<dbReference type="Proteomes" id="UP000001826">
    <property type="component" value="Chromosome"/>
</dbReference>
<dbReference type="GO" id="GO:0016597">
    <property type="term" value="F:amino acid binding"/>
    <property type="evidence" value="ECO:0007669"/>
    <property type="project" value="InterPro"/>
</dbReference>
<dbReference type="GO" id="GO:0004070">
    <property type="term" value="F:aspartate carbamoyltransferase activity"/>
    <property type="evidence" value="ECO:0007669"/>
    <property type="project" value="UniProtKB-UniRule"/>
</dbReference>
<dbReference type="GO" id="GO:0006207">
    <property type="term" value="P:'de novo' pyrimidine nucleobase biosynthetic process"/>
    <property type="evidence" value="ECO:0007669"/>
    <property type="project" value="InterPro"/>
</dbReference>
<dbReference type="GO" id="GO:0044205">
    <property type="term" value="P:'de novo' UMP biosynthetic process"/>
    <property type="evidence" value="ECO:0007669"/>
    <property type="project" value="UniProtKB-UniRule"/>
</dbReference>
<dbReference type="GO" id="GO:0006520">
    <property type="term" value="P:amino acid metabolic process"/>
    <property type="evidence" value="ECO:0007669"/>
    <property type="project" value="InterPro"/>
</dbReference>
<dbReference type="FunFam" id="3.40.50.1370:FF:000001">
    <property type="entry name" value="Aspartate carbamoyltransferase"/>
    <property type="match status" value="1"/>
</dbReference>
<dbReference type="FunFam" id="3.40.50.1370:FF:000002">
    <property type="entry name" value="Aspartate carbamoyltransferase 2"/>
    <property type="match status" value="1"/>
</dbReference>
<dbReference type="Gene3D" id="3.40.50.1370">
    <property type="entry name" value="Aspartate/ornithine carbamoyltransferase"/>
    <property type="match status" value="2"/>
</dbReference>
<dbReference type="HAMAP" id="MF_00001">
    <property type="entry name" value="Asp_carb_tr"/>
    <property type="match status" value="1"/>
</dbReference>
<dbReference type="InterPro" id="IPR006132">
    <property type="entry name" value="Asp/Orn_carbamoyltranf_P-bd"/>
</dbReference>
<dbReference type="InterPro" id="IPR006130">
    <property type="entry name" value="Asp/Orn_carbamoylTrfase"/>
</dbReference>
<dbReference type="InterPro" id="IPR036901">
    <property type="entry name" value="Asp/Orn_carbamoylTrfase_sf"/>
</dbReference>
<dbReference type="InterPro" id="IPR002082">
    <property type="entry name" value="Asp_carbamoyltransf"/>
</dbReference>
<dbReference type="InterPro" id="IPR006131">
    <property type="entry name" value="Asp_carbamoyltransf_Asp/Orn-bd"/>
</dbReference>
<dbReference type="NCBIfam" id="TIGR00670">
    <property type="entry name" value="asp_carb_tr"/>
    <property type="match status" value="1"/>
</dbReference>
<dbReference type="NCBIfam" id="NF002032">
    <property type="entry name" value="PRK00856.1"/>
    <property type="match status" value="1"/>
</dbReference>
<dbReference type="PANTHER" id="PTHR45753:SF6">
    <property type="entry name" value="ASPARTATE CARBAMOYLTRANSFERASE"/>
    <property type="match status" value="1"/>
</dbReference>
<dbReference type="PANTHER" id="PTHR45753">
    <property type="entry name" value="ORNITHINE CARBAMOYLTRANSFERASE, MITOCHONDRIAL"/>
    <property type="match status" value="1"/>
</dbReference>
<dbReference type="Pfam" id="PF00185">
    <property type="entry name" value="OTCace"/>
    <property type="match status" value="1"/>
</dbReference>
<dbReference type="Pfam" id="PF02729">
    <property type="entry name" value="OTCace_N"/>
    <property type="match status" value="1"/>
</dbReference>
<dbReference type="PRINTS" id="PR00100">
    <property type="entry name" value="AOTCASE"/>
</dbReference>
<dbReference type="PRINTS" id="PR00101">
    <property type="entry name" value="ATCASE"/>
</dbReference>
<dbReference type="SUPFAM" id="SSF53671">
    <property type="entry name" value="Aspartate/ornithine carbamoyltransferase"/>
    <property type="match status" value="1"/>
</dbReference>
<accession>Q8TVB2</accession>